<dbReference type="EMBL" id="CU928163">
    <property type="protein sequence ID" value="CAR14683.1"/>
    <property type="molecule type" value="Genomic_DNA"/>
</dbReference>
<dbReference type="RefSeq" id="WP_001295627.1">
    <property type="nucleotide sequence ID" value="NC_011751.1"/>
</dbReference>
<dbReference type="RefSeq" id="YP_002414188.1">
    <property type="nucleotide sequence ID" value="NC_011751.1"/>
</dbReference>
<dbReference type="SMR" id="B7ND33"/>
<dbReference type="STRING" id="585056.ECUMN_3527"/>
<dbReference type="GeneID" id="93778954"/>
<dbReference type="KEGG" id="eum:ECUMN_3527"/>
<dbReference type="PATRIC" id="fig|585056.7.peg.3702"/>
<dbReference type="HOGENOM" id="CLU_015114_1_3_6"/>
<dbReference type="Proteomes" id="UP000007097">
    <property type="component" value="Chromosome"/>
</dbReference>
<dbReference type="GO" id="GO:0005886">
    <property type="term" value="C:plasma membrane"/>
    <property type="evidence" value="ECO:0007669"/>
    <property type="project" value="UniProtKB-SubCell"/>
</dbReference>
<dbReference type="GO" id="GO:0046872">
    <property type="term" value="F:metal ion binding"/>
    <property type="evidence" value="ECO:0007669"/>
    <property type="project" value="UniProtKB-KW"/>
</dbReference>
<dbReference type="GO" id="GO:0005385">
    <property type="term" value="F:zinc ion transmembrane transporter activity"/>
    <property type="evidence" value="ECO:0007669"/>
    <property type="project" value="UniProtKB-UniRule"/>
</dbReference>
<dbReference type="HAMAP" id="MF_00548">
    <property type="entry name" value="ZupT"/>
    <property type="match status" value="1"/>
</dbReference>
<dbReference type="InterPro" id="IPR003689">
    <property type="entry name" value="ZIP"/>
</dbReference>
<dbReference type="InterPro" id="IPR023498">
    <property type="entry name" value="Zn_transptr_ZupT"/>
</dbReference>
<dbReference type="NCBIfam" id="NF003243">
    <property type="entry name" value="PRK04201.1"/>
    <property type="match status" value="1"/>
</dbReference>
<dbReference type="PANTHER" id="PTHR11040:SF205">
    <property type="entry name" value="ZINC TRANSPORTER ZUPT"/>
    <property type="match status" value="1"/>
</dbReference>
<dbReference type="PANTHER" id="PTHR11040">
    <property type="entry name" value="ZINC/IRON TRANSPORTER"/>
    <property type="match status" value="1"/>
</dbReference>
<dbReference type="Pfam" id="PF02535">
    <property type="entry name" value="Zip"/>
    <property type="match status" value="2"/>
</dbReference>
<organism>
    <name type="scientific">Escherichia coli O17:K52:H18 (strain UMN026 / ExPEC)</name>
    <dbReference type="NCBI Taxonomy" id="585056"/>
    <lineage>
        <taxon>Bacteria</taxon>
        <taxon>Pseudomonadati</taxon>
        <taxon>Pseudomonadota</taxon>
        <taxon>Gammaproteobacteria</taxon>
        <taxon>Enterobacterales</taxon>
        <taxon>Enterobacteriaceae</taxon>
        <taxon>Escherichia</taxon>
    </lineage>
</organism>
<reference key="1">
    <citation type="journal article" date="2009" name="PLoS Genet.">
        <title>Organised genome dynamics in the Escherichia coli species results in highly diverse adaptive paths.</title>
        <authorList>
            <person name="Touchon M."/>
            <person name="Hoede C."/>
            <person name="Tenaillon O."/>
            <person name="Barbe V."/>
            <person name="Baeriswyl S."/>
            <person name="Bidet P."/>
            <person name="Bingen E."/>
            <person name="Bonacorsi S."/>
            <person name="Bouchier C."/>
            <person name="Bouvet O."/>
            <person name="Calteau A."/>
            <person name="Chiapello H."/>
            <person name="Clermont O."/>
            <person name="Cruveiller S."/>
            <person name="Danchin A."/>
            <person name="Diard M."/>
            <person name="Dossat C."/>
            <person name="Karoui M.E."/>
            <person name="Frapy E."/>
            <person name="Garry L."/>
            <person name="Ghigo J.M."/>
            <person name="Gilles A.M."/>
            <person name="Johnson J."/>
            <person name="Le Bouguenec C."/>
            <person name="Lescat M."/>
            <person name="Mangenot S."/>
            <person name="Martinez-Jehanne V."/>
            <person name="Matic I."/>
            <person name="Nassif X."/>
            <person name="Oztas S."/>
            <person name="Petit M.A."/>
            <person name="Pichon C."/>
            <person name="Rouy Z."/>
            <person name="Ruf C.S."/>
            <person name="Schneider D."/>
            <person name="Tourret J."/>
            <person name="Vacherie B."/>
            <person name="Vallenet D."/>
            <person name="Medigue C."/>
            <person name="Rocha E.P.C."/>
            <person name="Denamur E."/>
        </authorList>
    </citation>
    <scope>NUCLEOTIDE SEQUENCE [LARGE SCALE GENOMIC DNA]</scope>
    <source>
        <strain>UMN026 / ExPEC</strain>
    </source>
</reference>
<proteinExistence type="inferred from homology"/>
<evidence type="ECO:0000255" key="1">
    <source>
        <dbReference type="HAMAP-Rule" id="MF_00548"/>
    </source>
</evidence>
<protein>
    <recommendedName>
        <fullName evidence="1">Zinc transporter ZupT</fullName>
    </recommendedName>
</protein>
<gene>
    <name evidence="1" type="primary">zupT</name>
    <name type="ordered locus">ECUMN_3527</name>
</gene>
<sequence length="257" mass="26485">MSVPLILTILAGAATFIGAFLGVLGQKPSNRLLAFSLGFAAGIMLLISLMEMLPAALAAEGMSPVLGYGMFIFGLLGYFGLDRMLPHAHPQDLMQKSVQPLPKSIKRTAILLTLGISLHNFPEGIATFVTASSNLELGFGIALAVALHNIPEGLAVAGPVYAATGSKRTAILWAGISGLAEILGGVLAWLILGSMISPVVMAAIMAAVAGIMVALSVDELMPLAKEIDPNNNPSYGVLCGMSVMGFSLVLLQTAGIG</sequence>
<name>ZUPT_ECOLU</name>
<comment type="function">
    <text evidence="1">Mediates zinc uptake. May also transport other divalent cations.</text>
</comment>
<comment type="catalytic activity">
    <reaction evidence="1">
        <text>Zn(2+)(in) = Zn(2+)(out)</text>
        <dbReference type="Rhea" id="RHEA:29351"/>
        <dbReference type="ChEBI" id="CHEBI:29105"/>
    </reaction>
</comment>
<comment type="subcellular location">
    <subcellularLocation>
        <location evidence="1">Cell inner membrane</location>
        <topology evidence="1">Multi-pass membrane protein</topology>
    </subcellularLocation>
</comment>
<comment type="similarity">
    <text evidence="1">Belongs to the ZIP transporter (TC 2.A.5) family. ZupT subfamily.</text>
</comment>
<keyword id="KW-0997">Cell inner membrane</keyword>
<keyword id="KW-1003">Cell membrane</keyword>
<keyword id="KW-0406">Ion transport</keyword>
<keyword id="KW-0408">Iron</keyword>
<keyword id="KW-0472">Membrane</keyword>
<keyword id="KW-0479">Metal-binding</keyword>
<keyword id="KW-0812">Transmembrane</keyword>
<keyword id="KW-1133">Transmembrane helix</keyword>
<keyword id="KW-0813">Transport</keyword>
<keyword id="KW-0862">Zinc</keyword>
<keyword id="KW-0864">Zinc transport</keyword>
<accession>B7ND33</accession>
<feature type="chain" id="PRO_1000128953" description="Zinc transporter ZupT">
    <location>
        <begin position="1"/>
        <end position="257"/>
    </location>
</feature>
<feature type="transmembrane region" description="Helical" evidence="1">
    <location>
        <begin position="5"/>
        <end position="25"/>
    </location>
</feature>
<feature type="transmembrane region" description="Helical" evidence="1">
    <location>
        <begin position="32"/>
        <end position="52"/>
    </location>
</feature>
<feature type="transmembrane region" description="Helical" evidence="1">
    <location>
        <begin position="61"/>
        <end position="81"/>
    </location>
</feature>
<feature type="transmembrane region" description="Helical" evidence="1">
    <location>
        <begin position="137"/>
        <end position="157"/>
    </location>
</feature>
<feature type="transmembrane region" description="Helical" evidence="1">
    <location>
        <begin position="171"/>
        <end position="191"/>
    </location>
</feature>
<feature type="transmembrane region" description="Helical" evidence="1">
    <location>
        <begin position="195"/>
        <end position="215"/>
    </location>
</feature>
<feature type="transmembrane region" description="Helical" evidence="1">
    <location>
        <begin position="236"/>
        <end position="256"/>
    </location>
</feature>
<feature type="binding site" description="M2 metal binding site" evidence="1">
    <location>
        <position position="120"/>
    </location>
    <ligand>
        <name>Fe(2+)</name>
        <dbReference type="ChEBI" id="CHEBI:29033"/>
    </ligand>
</feature>
<feature type="binding site" description="M2 metal binding site" evidence="1">
    <location>
        <position position="123"/>
    </location>
    <ligand>
        <name>Fe(2+)</name>
        <dbReference type="ChEBI" id="CHEBI:29033"/>
    </ligand>
</feature>
<feature type="binding site" description="M1 metal binding site" evidence="1">
    <location>
        <position position="123"/>
    </location>
    <ligand>
        <name>Zn(2+)</name>
        <dbReference type="ChEBI" id="CHEBI:29105"/>
    </ligand>
</feature>
<feature type="binding site" description="M1 metal binding site" evidence="1">
    <location>
        <position position="148"/>
    </location>
    <ligand>
        <name>Zn(2+)</name>
        <dbReference type="ChEBI" id="CHEBI:29105"/>
    </ligand>
</feature>
<feature type="binding site" description="M2 metal binding site" evidence="1">
    <location>
        <position position="149"/>
    </location>
    <ligand>
        <name>Fe(2+)</name>
        <dbReference type="ChEBI" id="CHEBI:29033"/>
    </ligand>
</feature>
<feature type="binding site" description="M2 metal binding site" evidence="1">
    <location>
        <position position="152"/>
    </location>
    <ligand>
        <name>Fe(2+)</name>
        <dbReference type="ChEBI" id="CHEBI:29033"/>
    </ligand>
</feature>
<feature type="binding site" description="M1 metal binding site" evidence="1">
    <location>
        <position position="152"/>
    </location>
    <ligand>
        <name>Zn(2+)</name>
        <dbReference type="ChEBI" id="CHEBI:29105"/>
    </ligand>
</feature>
<feature type="binding site" description="M2 metal binding site" evidence="1">
    <location>
        <position position="181"/>
    </location>
    <ligand>
        <name>Fe(2+)</name>
        <dbReference type="ChEBI" id="CHEBI:29033"/>
    </ligand>
</feature>